<evidence type="ECO:0000250" key="1"/>
<evidence type="ECO:0000305" key="2"/>
<proteinExistence type="inferred from homology"/>
<gene>
    <name type="primary">GEP5</name>
    <name type="synonym">RRG5</name>
    <name type="ORF">SCY_3669</name>
</gene>
<sequence>MASQVNALLLPVIESTPLHQITKVALTTTLTSKQSDYKFKEIAVPLTKSLQLYEKAQRRQDLRASLKALESIIYQTHFQWNNPLPRHAHLFQKHYHFLLTHWPFENHRDLVDSIAVNNGKLNSTSSRSVWLKADWITLFNVKNPWVQTPPSLVRLSGTDLDTFTPERIFLINSLGNHYKFLIANSHLSYNHKKYPSPGVQIPIRNALGEVSPAKQIAQLFARQLSHIYKSLFIENPPLSPENELALTAVFYDETVERRLRRLYMRACARAYTTTNADSTTEPLMFHCTRWEVD</sequence>
<comment type="function">
    <text evidence="1">Essential for respiratory growth and required for maintenance of mtDNA. Required for cell survival in the absence of prohibitins (By similarity).</text>
</comment>
<comment type="subcellular location">
    <subcellularLocation>
        <location evidence="1">Mitochondrion</location>
    </subcellularLocation>
</comment>
<comment type="similarity">
    <text evidence="2">Belongs to the GEP5 family.</text>
</comment>
<reference key="1">
    <citation type="journal article" date="2007" name="Proc. Natl. Acad. Sci. U.S.A.">
        <title>Genome sequencing and comparative analysis of Saccharomyces cerevisiae strain YJM789.</title>
        <authorList>
            <person name="Wei W."/>
            <person name="McCusker J.H."/>
            <person name="Hyman R.W."/>
            <person name="Jones T."/>
            <person name="Ning Y."/>
            <person name="Cao Z."/>
            <person name="Gu Z."/>
            <person name="Bruno D."/>
            <person name="Miranda M."/>
            <person name="Nguyen M."/>
            <person name="Wilhelmy J."/>
            <person name="Komp C."/>
            <person name="Tamse R."/>
            <person name="Wang X."/>
            <person name="Jia P."/>
            <person name="Luedi P."/>
            <person name="Oefner P.J."/>
            <person name="David L."/>
            <person name="Dietrich F.S."/>
            <person name="Li Y."/>
            <person name="Davis R.W."/>
            <person name="Steinmetz L.M."/>
        </authorList>
    </citation>
    <scope>NUCLEOTIDE SEQUENCE [LARGE SCALE GENOMIC DNA]</scope>
    <source>
        <strain>YJM789</strain>
    </source>
</reference>
<dbReference type="EMBL" id="AAFW02000167">
    <property type="protein sequence ID" value="EDN59636.1"/>
    <property type="molecule type" value="Genomic_DNA"/>
</dbReference>
<dbReference type="HOGENOM" id="CLU_079415_0_0_1"/>
<dbReference type="Proteomes" id="UP000007060">
    <property type="component" value="Unassembled WGS sequence"/>
</dbReference>
<dbReference type="GO" id="GO:0005739">
    <property type="term" value="C:mitochondrion"/>
    <property type="evidence" value="ECO:0007669"/>
    <property type="project" value="UniProtKB-SubCell"/>
</dbReference>
<dbReference type="GO" id="GO:0000002">
    <property type="term" value="P:mitochondrial genome maintenance"/>
    <property type="evidence" value="ECO:0007669"/>
    <property type="project" value="InterPro"/>
</dbReference>
<dbReference type="InterPro" id="IPR031455">
    <property type="entry name" value="Gep5"/>
</dbReference>
<dbReference type="Pfam" id="PF17053">
    <property type="entry name" value="GEP5"/>
    <property type="match status" value="1"/>
</dbReference>
<name>GEP5_YEAS7</name>
<accession>A7A0Z5</accession>
<feature type="chain" id="PRO_0000399690" description="Genetic interactor of prohibitin 5, mitochondrial">
    <location>
        <begin position="1"/>
        <end position="293"/>
    </location>
</feature>
<protein>
    <recommendedName>
        <fullName>Genetic interactor of prohibitin 5, mitochondrial</fullName>
    </recommendedName>
    <alternativeName>
        <fullName>Required for respiratory growth protein 5</fullName>
    </alternativeName>
</protein>
<organism>
    <name type="scientific">Saccharomyces cerevisiae (strain YJM789)</name>
    <name type="common">Baker's yeast</name>
    <dbReference type="NCBI Taxonomy" id="307796"/>
    <lineage>
        <taxon>Eukaryota</taxon>
        <taxon>Fungi</taxon>
        <taxon>Dikarya</taxon>
        <taxon>Ascomycota</taxon>
        <taxon>Saccharomycotina</taxon>
        <taxon>Saccharomycetes</taxon>
        <taxon>Saccharomycetales</taxon>
        <taxon>Saccharomycetaceae</taxon>
        <taxon>Saccharomyces</taxon>
    </lineage>
</organism>
<keyword id="KW-0496">Mitochondrion</keyword>